<evidence type="ECO:0000255" key="1">
    <source>
        <dbReference type="HAMAP-Rule" id="MF_00229"/>
    </source>
</evidence>
<reference key="1">
    <citation type="journal article" date="2007" name="J. Bacteriol.">
        <title>Complete genome of acute rheumatic fever-associated serotype M5 Streptococcus pyogenes strain Manfredo.</title>
        <authorList>
            <person name="Holden M.T.G."/>
            <person name="Scott A."/>
            <person name="Cherevach I."/>
            <person name="Chillingworth T."/>
            <person name="Churcher C."/>
            <person name="Cronin A."/>
            <person name="Dowd L."/>
            <person name="Feltwell T."/>
            <person name="Hamlin N."/>
            <person name="Holroyd S."/>
            <person name="Jagels K."/>
            <person name="Moule S."/>
            <person name="Mungall K."/>
            <person name="Quail M.A."/>
            <person name="Price C."/>
            <person name="Rabbinowitsch E."/>
            <person name="Sharp S."/>
            <person name="Skelton J."/>
            <person name="Whitehead S."/>
            <person name="Barrell B.G."/>
            <person name="Kehoe M."/>
            <person name="Parkhill J."/>
        </authorList>
    </citation>
    <scope>NUCLEOTIDE SEQUENCE [LARGE SCALE GENOMIC DNA]</scope>
    <source>
        <strain>Manfredo</strain>
    </source>
</reference>
<proteinExistence type="inferred from homology"/>
<accession>A2RGS5</accession>
<organism>
    <name type="scientific">Streptococcus pyogenes serotype M5 (strain Manfredo)</name>
    <dbReference type="NCBI Taxonomy" id="160491"/>
    <lineage>
        <taxon>Bacteria</taxon>
        <taxon>Bacillati</taxon>
        <taxon>Bacillota</taxon>
        <taxon>Bacilli</taxon>
        <taxon>Lactobacillales</taxon>
        <taxon>Streptococcaceae</taxon>
        <taxon>Streptococcus</taxon>
    </lineage>
</organism>
<keyword id="KW-0963">Cytoplasm</keyword>
<keyword id="KW-0369">Histidine metabolism</keyword>
<keyword id="KW-0456">Lyase</keyword>
<protein>
    <recommendedName>
        <fullName evidence="1">Histidine ammonia-lyase</fullName>
        <shortName evidence="1">Histidase</shortName>
        <ecNumber evidence="1">4.3.1.3</ecNumber>
    </recommendedName>
</protein>
<feature type="chain" id="PRO_1000021573" description="Histidine ammonia-lyase">
    <location>
        <begin position="1"/>
        <end position="513"/>
    </location>
</feature>
<feature type="modified residue" description="2,3-didehydroalanine (Ser)" evidence="1">
    <location>
        <position position="145"/>
    </location>
</feature>
<feature type="cross-link" description="5-imidazolinone (Ala-Gly)" evidence="1">
    <location>
        <begin position="144"/>
        <end position="146"/>
    </location>
</feature>
<dbReference type="EC" id="4.3.1.3" evidence="1"/>
<dbReference type="EMBL" id="AM295007">
    <property type="protein sequence ID" value="CAM31057.1"/>
    <property type="molecule type" value="Genomic_DNA"/>
</dbReference>
<dbReference type="RefSeq" id="WP_011889213.1">
    <property type="nucleotide sequence ID" value="NC_009332.1"/>
</dbReference>
<dbReference type="SMR" id="A2RGS5"/>
<dbReference type="KEGG" id="spf:SpyM51735"/>
<dbReference type="HOGENOM" id="CLU_014801_4_0_9"/>
<dbReference type="UniPathway" id="UPA00379">
    <property type="reaction ID" value="UER00549"/>
</dbReference>
<dbReference type="GO" id="GO:0005737">
    <property type="term" value="C:cytoplasm"/>
    <property type="evidence" value="ECO:0007669"/>
    <property type="project" value="UniProtKB-SubCell"/>
</dbReference>
<dbReference type="GO" id="GO:0004397">
    <property type="term" value="F:histidine ammonia-lyase activity"/>
    <property type="evidence" value="ECO:0007669"/>
    <property type="project" value="UniProtKB-UniRule"/>
</dbReference>
<dbReference type="GO" id="GO:0019556">
    <property type="term" value="P:L-histidine catabolic process to glutamate and formamide"/>
    <property type="evidence" value="ECO:0007669"/>
    <property type="project" value="UniProtKB-UniPathway"/>
</dbReference>
<dbReference type="GO" id="GO:0019557">
    <property type="term" value="P:L-histidine catabolic process to glutamate and formate"/>
    <property type="evidence" value="ECO:0007669"/>
    <property type="project" value="UniProtKB-UniPathway"/>
</dbReference>
<dbReference type="CDD" id="cd00332">
    <property type="entry name" value="PAL-HAL"/>
    <property type="match status" value="1"/>
</dbReference>
<dbReference type="FunFam" id="1.10.275.10:FF:000005">
    <property type="entry name" value="Histidine ammonia-lyase"/>
    <property type="match status" value="1"/>
</dbReference>
<dbReference type="FunFam" id="1.20.200.10:FF:000003">
    <property type="entry name" value="Histidine ammonia-lyase"/>
    <property type="match status" value="1"/>
</dbReference>
<dbReference type="Gene3D" id="1.20.200.10">
    <property type="entry name" value="Fumarase/aspartase (Central domain)"/>
    <property type="match status" value="1"/>
</dbReference>
<dbReference type="Gene3D" id="1.10.275.10">
    <property type="entry name" value="Fumarase/aspartase (N-terminal domain)"/>
    <property type="match status" value="1"/>
</dbReference>
<dbReference type="HAMAP" id="MF_00229">
    <property type="entry name" value="His_ammonia_lyase"/>
    <property type="match status" value="1"/>
</dbReference>
<dbReference type="InterPro" id="IPR001106">
    <property type="entry name" value="Aromatic_Lyase"/>
</dbReference>
<dbReference type="InterPro" id="IPR024083">
    <property type="entry name" value="Fumarase/histidase_N"/>
</dbReference>
<dbReference type="InterPro" id="IPR005921">
    <property type="entry name" value="HutH"/>
</dbReference>
<dbReference type="InterPro" id="IPR008948">
    <property type="entry name" value="L-Aspartase-like"/>
</dbReference>
<dbReference type="InterPro" id="IPR022313">
    <property type="entry name" value="Phe/His_NH3-lyase_AS"/>
</dbReference>
<dbReference type="NCBIfam" id="TIGR01225">
    <property type="entry name" value="hutH"/>
    <property type="match status" value="1"/>
</dbReference>
<dbReference type="NCBIfam" id="NF006871">
    <property type="entry name" value="PRK09367.1"/>
    <property type="match status" value="1"/>
</dbReference>
<dbReference type="PANTHER" id="PTHR10362">
    <property type="entry name" value="HISTIDINE AMMONIA-LYASE"/>
    <property type="match status" value="1"/>
</dbReference>
<dbReference type="Pfam" id="PF00221">
    <property type="entry name" value="Lyase_aromatic"/>
    <property type="match status" value="1"/>
</dbReference>
<dbReference type="SUPFAM" id="SSF48557">
    <property type="entry name" value="L-aspartase-like"/>
    <property type="match status" value="1"/>
</dbReference>
<dbReference type="PROSITE" id="PS00488">
    <property type="entry name" value="PAL_HISTIDASE"/>
    <property type="match status" value="1"/>
</dbReference>
<comment type="catalytic activity">
    <reaction evidence="1">
        <text>L-histidine = trans-urocanate + NH4(+)</text>
        <dbReference type="Rhea" id="RHEA:21232"/>
        <dbReference type="ChEBI" id="CHEBI:17771"/>
        <dbReference type="ChEBI" id="CHEBI:28938"/>
        <dbReference type="ChEBI" id="CHEBI:57595"/>
        <dbReference type="EC" id="4.3.1.3"/>
    </reaction>
</comment>
<comment type="pathway">
    <text evidence="1">Amino-acid degradation; L-histidine degradation into L-glutamate; N-formimidoyl-L-glutamate from L-histidine: step 1/3.</text>
</comment>
<comment type="subcellular location">
    <subcellularLocation>
        <location evidence="1">Cytoplasm</location>
    </subcellularLocation>
</comment>
<comment type="PTM">
    <text evidence="1">Contains an active site 4-methylidene-imidazol-5-one (MIO), which is formed autocatalytically by cyclization and dehydration of residues Ala-Ser-Gly.</text>
</comment>
<comment type="similarity">
    <text evidence="1">Belongs to the PAL/histidase family.</text>
</comment>
<name>HUTH_STRPG</name>
<gene>
    <name evidence="1" type="primary">hutH</name>
    <name type="ordered locus">SpyM51735</name>
</gene>
<sequence length="513" mass="55526">MTRVINLDGESLTLEDVIAIARQGVACRIDDSAIEAVNASRKIVDDIVSEKRVVYGVTTGFGSLCNVSISPEDTVQLQENLIRTHASGFGDPLPEDAVRAIMLIRINSLVKGYSGIRLSTIEKLLELLNKGVHPYIPEKGSLGASGDLAPLAHMVLPMLGLGKAYYKGEFLSGQEALDKAGIDKISLAAKEGLALINGTTVLTAIGALATYDAIQLLKLSDLAGALSLEVHNGITSPFEENLHTIRPQSGQLATARNIRNLLEGSQNTTVATQSRVQDPYTLRCMPQIHGASKDSIAYVKSKVDIEINSVTDNPIICKDGHVISGGNFHGEPMAQPFDFLGIAISEIGNVSERRVERLVNSQLSKLPSFLVKYPGLNSGFMITQYACASLASENKVLAHPASVDSIPSCENQEDFVSMGTTAARKAFEILKNSRRIVATEIMAACQALDLKPENHELGKGTKVAYDLFRKEVNFIEHDKHIEIYDELNKASTVIEDPSFLEAVEQAVELSIQF</sequence>